<proteinExistence type="inferred from homology"/>
<dbReference type="EC" id="1.1.1.86" evidence="1"/>
<dbReference type="EMBL" id="CP000269">
    <property type="protein sequence ID" value="ABR88740.1"/>
    <property type="molecule type" value="Genomic_DNA"/>
</dbReference>
<dbReference type="RefSeq" id="WP_012080001.1">
    <property type="nucleotide sequence ID" value="NC_009659.1"/>
</dbReference>
<dbReference type="SMR" id="A6SZZ1"/>
<dbReference type="STRING" id="375286.mma_2148"/>
<dbReference type="KEGG" id="mms:mma_2148"/>
<dbReference type="eggNOG" id="COG0059">
    <property type="taxonomic scope" value="Bacteria"/>
</dbReference>
<dbReference type="HOGENOM" id="CLU_033821_0_1_4"/>
<dbReference type="OrthoDB" id="9804088at2"/>
<dbReference type="UniPathway" id="UPA00047">
    <property type="reaction ID" value="UER00056"/>
</dbReference>
<dbReference type="UniPathway" id="UPA00049">
    <property type="reaction ID" value="UER00060"/>
</dbReference>
<dbReference type="Proteomes" id="UP000006388">
    <property type="component" value="Chromosome"/>
</dbReference>
<dbReference type="GO" id="GO:0005829">
    <property type="term" value="C:cytosol"/>
    <property type="evidence" value="ECO:0007669"/>
    <property type="project" value="TreeGrafter"/>
</dbReference>
<dbReference type="GO" id="GO:0004455">
    <property type="term" value="F:ketol-acid reductoisomerase activity"/>
    <property type="evidence" value="ECO:0007669"/>
    <property type="project" value="UniProtKB-UniRule"/>
</dbReference>
<dbReference type="GO" id="GO:0000287">
    <property type="term" value="F:magnesium ion binding"/>
    <property type="evidence" value="ECO:0007669"/>
    <property type="project" value="UniProtKB-UniRule"/>
</dbReference>
<dbReference type="GO" id="GO:0050661">
    <property type="term" value="F:NADP binding"/>
    <property type="evidence" value="ECO:0007669"/>
    <property type="project" value="InterPro"/>
</dbReference>
<dbReference type="GO" id="GO:0009097">
    <property type="term" value="P:isoleucine biosynthetic process"/>
    <property type="evidence" value="ECO:0007669"/>
    <property type="project" value="UniProtKB-UniRule"/>
</dbReference>
<dbReference type="GO" id="GO:0009099">
    <property type="term" value="P:L-valine biosynthetic process"/>
    <property type="evidence" value="ECO:0007669"/>
    <property type="project" value="UniProtKB-UniRule"/>
</dbReference>
<dbReference type="FunFam" id="3.40.50.720:FF:000023">
    <property type="entry name" value="Ketol-acid reductoisomerase (NADP(+))"/>
    <property type="match status" value="1"/>
</dbReference>
<dbReference type="Gene3D" id="6.10.240.10">
    <property type="match status" value="1"/>
</dbReference>
<dbReference type="Gene3D" id="3.40.50.720">
    <property type="entry name" value="NAD(P)-binding Rossmann-like Domain"/>
    <property type="match status" value="1"/>
</dbReference>
<dbReference type="HAMAP" id="MF_00435">
    <property type="entry name" value="IlvC"/>
    <property type="match status" value="1"/>
</dbReference>
<dbReference type="InterPro" id="IPR008927">
    <property type="entry name" value="6-PGluconate_DH-like_C_sf"/>
</dbReference>
<dbReference type="InterPro" id="IPR013023">
    <property type="entry name" value="KARI"/>
</dbReference>
<dbReference type="InterPro" id="IPR000506">
    <property type="entry name" value="KARI_C"/>
</dbReference>
<dbReference type="InterPro" id="IPR013116">
    <property type="entry name" value="KARI_N"/>
</dbReference>
<dbReference type="InterPro" id="IPR014359">
    <property type="entry name" value="KARI_prok"/>
</dbReference>
<dbReference type="InterPro" id="IPR036291">
    <property type="entry name" value="NAD(P)-bd_dom_sf"/>
</dbReference>
<dbReference type="NCBIfam" id="TIGR00465">
    <property type="entry name" value="ilvC"/>
    <property type="match status" value="1"/>
</dbReference>
<dbReference type="NCBIfam" id="NF004017">
    <property type="entry name" value="PRK05479.1"/>
    <property type="match status" value="1"/>
</dbReference>
<dbReference type="NCBIfam" id="NF009940">
    <property type="entry name" value="PRK13403.1"/>
    <property type="match status" value="1"/>
</dbReference>
<dbReference type="PANTHER" id="PTHR21371">
    <property type="entry name" value="KETOL-ACID REDUCTOISOMERASE, MITOCHONDRIAL"/>
    <property type="match status" value="1"/>
</dbReference>
<dbReference type="PANTHER" id="PTHR21371:SF1">
    <property type="entry name" value="KETOL-ACID REDUCTOISOMERASE, MITOCHONDRIAL"/>
    <property type="match status" value="1"/>
</dbReference>
<dbReference type="Pfam" id="PF01450">
    <property type="entry name" value="KARI_C"/>
    <property type="match status" value="1"/>
</dbReference>
<dbReference type="Pfam" id="PF07991">
    <property type="entry name" value="KARI_N"/>
    <property type="match status" value="1"/>
</dbReference>
<dbReference type="PIRSF" id="PIRSF000116">
    <property type="entry name" value="IlvC_gammaproteo"/>
    <property type="match status" value="1"/>
</dbReference>
<dbReference type="SUPFAM" id="SSF48179">
    <property type="entry name" value="6-phosphogluconate dehydrogenase C-terminal domain-like"/>
    <property type="match status" value="1"/>
</dbReference>
<dbReference type="SUPFAM" id="SSF51735">
    <property type="entry name" value="NAD(P)-binding Rossmann-fold domains"/>
    <property type="match status" value="1"/>
</dbReference>
<dbReference type="PROSITE" id="PS51851">
    <property type="entry name" value="KARI_C"/>
    <property type="match status" value="1"/>
</dbReference>
<dbReference type="PROSITE" id="PS51850">
    <property type="entry name" value="KARI_N"/>
    <property type="match status" value="1"/>
</dbReference>
<sequence>MKVFYDKDCDLSLIKGKNVAIIGYGSQGHAHAQNLNDSGVKVTVGLRKGGASWDKVKNAGLNVAEVNDAVKAADVIMILLPDENIAQVYNENVAPYAKQGAVLAFAHGFNVHYGQVVPRADLDVIMIAPKAPGHTVRGTYSQGGGVPHLIAVYQDKSGVARDIALSYAMANGGGRAGIIETNFREETETDLFGEQAVLCGGAVELIKAGFETLTEAGYAPEMAYFECLHELKLIVDLIYEGGIANMNYSISNNAEYGEYVTGPKVVTEDTKNAMRQCLKDIQTGEYAKSFILENKAGAPTLISRRRLTAEHQIEEVGAKLRAMMPWIAKNKLVDQTKN</sequence>
<reference key="1">
    <citation type="journal article" date="2007" name="PLoS Genet.">
        <title>Genome analysis of Minibacterium massiliensis highlights the convergent evolution of water-living bacteria.</title>
        <authorList>
            <person name="Audic S."/>
            <person name="Robert C."/>
            <person name="Campagna B."/>
            <person name="Parinello H."/>
            <person name="Claverie J.-M."/>
            <person name="Raoult D."/>
            <person name="Drancourt M."/>
        </authorList>
    </citation>
    <scope>NUCLEOTIDE SEQUENCE [LARGE SCALE GENOMIC DNA]</scope>
    <source>
        <strain>Marseille</strain>
    </source>
</reference>
<accession>A6SZZ1</accession>
<name>ILVC_JANMA</name>
<organism>
    <name type="scientific">Janthinobacterium sp. (strain Marseille)</name>
    <name type="common">Minibacterium massiliensis</name>
    <dbReference type="NCBI Taxonomy" id="375286"/>
    <lineage>
        <taxon>Bacteria</taxon>
        <taxon>Pseudomonadati</taxon>
        <taxon>Pseudomonadota</taxon>
        <taxon>Betaproteobacteria</taxon>
        <taxon>Burkholderiales</taxon>
        <taxon>Oxalobacteraceae</taxon>
        <taxon>Janthinobacterium</taxon>
    </lineage>
</organism>
<gene>
    <name evidence="1" type="primary">ilvC</name>
    <name type="ordered locus">mma_2148</name>
</gene>
<evidence type="ECO:0000255" key="1">
    <source>
        <dbReference type="HAMAP-Rule" id="MF_00435"/>
    </source>
</evidence>
<evidence type="ECO:0000255" key="2">
    <source>
        <dbReference type="PROSITE-ProRule" id="PRU01197"/>
    </source>
</evidence>
<evidence type="ECO:0000255" key="3">
    <source>
        <dbReference type="PROSITE-ProRule" id="PRU01198"/>
    </source>
</evidence>
<keyword id="KW-0028">Amino-acid biosynthesis</keyword>
<keyword id="KW-0100">Branched-chain amino acid biosynthesis</keyword>
<keyword id="KW-0460">Magnesium</keyword>
<keyword id="KW-0479">Metal-binding</keyword>
<keyword id="KW-0521">NADP</keyword>
<keyword id="KW-0560">Oxidoreductase</keyword>
<comment type="function">
    <text evidence="1">Involved in the biosynthesis of branched-chain amino acids (BCAA). Catalyzes an alkyl-migration followed by a ketol-acid reduction of (S)-2-acetolactate (S2AL) to yield (R)-2,3-dihydroxy-isovalerate. In the isomerase reaction, S2AL is rearranged via a Mg-dependent methyl migration to produce 3-hydroxy-3-methyl-2-ketobutyrate (HMKB). In the reductase reaction, this 2-ketoacid undergoes a metal-dependent reduction by NADPH to yield (R)-2,3-dihydroxy-isovalerate.</text>
</comment>
<comment type="catalytic activity">
    <reaction evidence="1">
        <text>(2R)-2,3-dihydroxy-3-methylbutanoate + NADP(+) = (2S)-2-acetolactate + NADPH + H(+)</text>
        <dbReference type="Rhea" id="RHEA:22068"/>
        <dbReference type="ChEBI" id="CHEBI:15378"/>
        <dbReference type="ChEBI" id="CHEBI:49072"/>
        <dbReference type="ChEBI" id="CHEBI:57783"/>
        <dbReference type="ChEBI" id="CHEBI:58349"/>
        <dbReference type="ChEBI" id="CHEBI:58476"/>
        <dbReference type="EC" id="1.1.1.86"/>
    </reaction>
</comment>
<comment type="catalytic activity">
    <reaction evidence="1">
        <text>(2R,3R)-2,3-dihydroxy-3-methylpentanoate + NADP(+) = (S)-2-ethyl-2-hydroxy-3-oxobutanoate + NADPH + H(+)</text>
        <dbReference type="Rhea" id="RHEA:13493"/>
        <dbReference type="ChEBI" id="CHEBI:15378"/>
        <dbReference type="ChEBI" id="CHEBI:49256"/>
        <dbReference type="ChEBI" id="CHEBI:49258"/>
        <dbReference type="ChEBI" id="CHEBI:57783"/>
        <dbReference type="ChEBI" id="CHEBI:58349"/>
        <dbReference type="EC" id="1.1.1.86"/>
    </reaction>
</comment>
<comment type="cofactor">
    <cofactor evidence="1">
        <name>Mg(2+)</name>
        <dbReference type="ChEBI" id="CHEBI:18420"/>
    </cofactor>
    <text evidence="1">Binds 2 magnesium ions per subunit.</text>
</comment>
<comment type="pathway">
    <text evidence="1">Amino-acid biosynthesis; L-isoleucine biosynthesis; L-isoleucine from 2-oxobutanoate: step 2/4.</text>
</comment>
<comment type="pathway">
    <text evidence="1">Amino-acid biosynthesis; L-valine biosynthesis; L-valine from pyruvate: step 2/4.</text>
</comment>
<comment type="similarity">
    <text evidence="1">Belongs to the ketol-acid reductoisomerase family.</text>
</comment>
<feature type="chain" id="PRO_1000050519" description="Ketol-acid reductoisomerase (NADP(+))">
    <location>
        <begin position="1"/>
        <end position="338"/>
    </location>
</feature>
<feature type="domain" description="KARI N-terminal Rossmann" evidence="2">
    <location>
        <begin position="1"/>
        <end position="181"/>
    </location>
</feature>
<feature type="domain" description="KARI C-terminal knotted" evidence="3">
    <location>
        <begin position="182"/>
        <end position="327"/>
    </location>
</feature>
<feature type="active site" evidence="1">
    <location>
        <position position="107"/>
    </location>
</feature>
<feature type="binding site" evidence="1">
    <location>
        <begin position="24"/>
        <end position="27"/>
    </location>
    <ligand>
        <name>NADP(+)</name>
        <dbReference type="ChEBI" id="CHEBI:58349"/>
    </ligand>
</feature>
<feature type="binding site" evidence="1">
    <location>
        <position position="47"/>
    </location>
    <ligand>
        <name>NADP(+)</name>
        <dbReference type="ChEBI" id="CHEBI:58349"/>
    </ligand>
</feature>
<feature type="binding site" evidence="1">
    <location>
        <position position="52"/>
    </location>
    <ligand>
        <name>NADP(+)</name>
        <dbReference type="ChEBI" id="CHEBI:58349"/>
    </ligand>
</feature>
<feature type="binding site" evidence="1">
    <location>
        <position position="133"/>
    </location>
    <ligand>
        <name>NADP(+)</name>
        <dbReference type="ChEBI" id="CHEBI:58349"/>
    </ligand>
</feature>
<feature type="binding site" evidence="1">
    <location>
        <position position="190"/>
    </location>
    <ligand>
        <name>Mg(2+)</name>
        <dbReference type="ChEBI" id="CHEBI:18420"/>
        <label>1</label>
    </ligand>
</feature>
<feature type="binding site" evidence="1">
    <location>
        <position position="190"/>
    </location>
    <ligand>
        <name>Mg(2+)</name>
        <dbReference type="ChEBI" id="CHEBI:18420"/>
        <label>2</label>
    </ligand>
</feature>
<feature type="binding site" evidence="1">
    <location>
        <position position="194"/>
    </location>
    <ligand>
        <name>Mg(2+)</name>
        <dbReference type="ChEBI" id="CHEBI:18420"/>
        <label>1</label>
    </ligand>
</feature>
<feature type="binding site" evidence="1">
    <location>
        <position position="226"/>
    </location>
    <ligand>
        <name>Mg(2+)</name>
        <dbReference type="ChEBI" id="CHEBI:18420"/>
        <label>2</label>
    </ligand>
</feature>
<feature type="binding site" evidence="1">
    <location>
        <position position="230"/>
    </location>
    <ligand>
        <name>Mg(2+)</name>
        <dbReference type="ChEBI" id="CHEBI:18420"/>
        <label>2</label>
    </ligand>
</feature>
<feature type="binding site" evidence="1">
    <location>
        <position position="251"/>
    </location>
    <ligand>
        <name>substrate</name>
    </ligand>
</feature>
<protein>
    <recommendedName>
        <fullName evidence="1">Ketol-acid reductoisomerase (NADP(+))</fullName>
        <shortName evidence="1">KARI</shortName>
        <ecNumber evidence="1">1.1.1.86</ecNumber>
    </recommendedName>
    <alternativeName>
        <fullName evidence="1">Acetohydroxy-acid isomeroreductase</fullName>
        <shortName evidence="1">AHIR</shortName>
    </alternativeName>
    <alternativeName>
        <fullName evidence="1">Alpha-keto-beta-hydroxylacyl reductoisomerase</fullName>
    </alternativeName>
    <alternativeName>
        <fullName evidence="1">Ketol-acid reductoisomerase type 1</fullName>
    </alternativeName>
    <alternativeName>
        <fullName evidence="1">Ketol-acid reductoisomerase type I</fullName>
    </alternativeName>
</protein>